<sequence>MAIKFLEVIKPFCVILPEIQKPERKIQFKEKVLWTAITLFIFLVCCQIPLFGIMSSDSADPFYWMRVILASNRGTLMELGISPIVTSGLIMQLLAGAKIIEVGDTPKDRALFNGAQKLFGMIITIGQSIVYVMTGMYGDPSEMGAGICLLITIQLFVAGLIVLLLDELLQKGYGLGSGISLFIATNICETIVWKAFSPTTVNTGRGMEFEGAIIALFHLLATRTDKVRALREAFYRQNLPNLMNLIATIFVFAVVIYFQGFRVDLPIKSARYRGQYNTYPIKLFYTSNIPIILQSALVSNLYVISQMLSARFSGNLLVSLLGTWSDTSSGGPARAYPVGGLCYYLSPPESFGSVLEDPVHAVVYIVFMLGSCAFFSKTWIEVSGSSAKDVAKQLKEQQMVMRGHRETSMVHELNRYIPTAAAFGGLCIGALSVLADFLGAIGSGTGILLAVTIIYQYFEIFVKEQSEVGSMGALLF</sequence>
<protein>
    <recommendedName>
        <fullName>Protein transport protein Sec61 subunit alpha isoform 1</fullName>
        <shortName>Sec61 alpha-1</shortName>
    </recommendedName>
</protein>
<feature type="chain" id="PRO_0000131792" description="Protein transport protein Sec61 subunit alpha isoform 1">
    <location>
        <begin position="1"/>
        <end position="476"/>
    </location>
</feature>
<feature type="topological domain" description="Cytoplasmic" evidence="3">
    <location>
        <begin position="1"/>
        <end position="33"/>
    </location>
</feature>
<feature type="transmembrane region" description="Helical" evidence="3">
    <location>
        <begin position="34"/>
        <end position="53"/>
    </location>
</feature>
<feature type="topological domain" description="Lumenal" evidence="3">
    <location>
        <begin position="54"/>
        <end position="76"/>
    </location>
</feature>
<feature type="transmembrane region" description="Helical" evidence="3">
    <location>
        <begin position="77"/>
        <end position="96"/>
    </location>
</feature>
<feature type="topological domain" description="Cytoplasmic" evidence="3">
    <location>
        <begin position="97"/>
        <end position="117"/>
    </location>
</feature>
<feature type="transmembrane region" description="Helical" evidence="3">
    <location>
        <begin position="118"/>
        <end position="138"/>
    </location>
</feature>
<feature type="topological domain" description="Lumenal" evidence="3">
    <location>
        <begin position="139"/>
        <end position="144"/>
    </location>
</feature>
<feature type="transmembrane region" description="Helical" evidence="3">
    <location>
        <begin position="145"/>
        <end position="165"/>
    </location>
</feature>
<feature type="topological domain" description="Cytoplasmic" evidence="3">
    <location>
        <begin position="166"/>
        <end position="172"/>
    </location>
</feature>
<feature type="transmembrane region" description="Helical" evidence="3">
    <location>
        <begin position="173"/>
        <end position="193"/>
    </location>
</feature>
<feature type="topological domain" description="Lumenal" evidence="3">
    <location>
        <begin position="194"/>
        <end position="240"/>
    </location>
</feature>
<feature type="transmembrane region" description="Helical" evidence="3">
    <location>
        <begin position="241"/>
        <end position="261"/>
    </location>
</feature>
<feature type="topological domain" description="Cytoplasmic" evidence="3">
    <location>
        <begin position="262"/>
        <end position="288"/>
    </location>
</feature>
<feature type="transmembrane region" description="Helical" evidence="3">
    <location>
        <begin position="289"/>
        <end position="309"/>
    </location>
</feature>
<feature type="topological domain" description="Lumenal" evidence="3">
    <location>
        <begin position="310"/>
        <end position="354"/>
    </location>
</feature>
<feature type="transmembrane region" description="Helical" evidence="3">
    <location>
        <begin position="355"/>
        <end position="375"/>
    </location>
</feature>
<feature type="topological domain" description="Cytoplasmic" evidence="3">
    <location>
        <begin position="376"/>
        <end position="420"/>
    </location>
</feature>
<feature type="transmembrane region" description="Helical" evidence="3">
    <location>
        <begin position="421"/>
        <end position="441"/>
    </location>
</feature>
<feature type="topological domain" description="Lumenal" evidence="3">
    <location>
        <begin position="442"/>
        <end position="445"/>
    </location>
</feature>
<feature type="transmembrane region" description="Helical" evidence="3">
    <location>
        <begin position="446"/>
        <end position="462"/>
    </location>
</feature>
<feature type="topological domain" description="Cytoplasmic" evidence="3">
    <location>
        <begin position="463"/>
        <end position="476"/>
    </location>
</feature>
<feature type="mutagenesis site" description="Rescued partially pronephric kidney tubule atrophy in zebrafish morpholino knockdown." evidence="4">
    <original>V</original>
    <variation>G</variation>
    <location>
        <position position="67"/>
    </location>
</feature>
<feature type="mutagenesis site" description="Fails to rescue pronephric kidney tubule atrophy in zebrafish morpholino knockdown." evidence="4">
    <original>T</original>
    <variation>A</variation>
    <location>
        <position position="185"/>
    </location>
</feature>
<name>S61A1_MOUSE</name>
<evidence type="ECO:0000250" key="1">
    <source>
        <dbReference type="UniProtKB" id="P38377"/>
    </source>
</evidence>
<evidence type="ECO:0000250" key="2">
    <source>
        <dbReference type="UniProtKB" id="P61619"/>
    </source>
</evidence>
<evidence type="ECO:0000255" key="3"/>
<evidence type="ECO:0000269" key="4">
    <source>
    </source>
</evidence>
<evidence type="ECO:0000305" key="5"/>
<comment type="function">
    <text evidence="2 4">Component of SEC61 channel-forming translocon complex that mediates transport of signal peptide-containing precursor polypeptides across the endoplasmic reticulum (ER). Forms a ribosome receptor and a gated pore in the ER membrane, both functions required for cotranslational translocation of nascent polypeptides. May cooperate with auxiliary protein SEC62, SEC63 and HSPA5/BiP to enable post-translational transport of small presecretory proteins. The SEC61 channel is also involved in ER membrane insertion of transmembrane proteins: it mediates membrane insertion of the first few transmembrane segments of proteins, while insertion of subsequent transmembrane regions of multi-pass membrane proteins is mediated by the multi-pass translocon (MPT) complex. The SEC61 channel cooperates with the translocating protein TRAM1 to import nascent proteins into the ER. Controls the passive efflux of calcium ions from the ER lumen to the cytosol through SEC61 channel, contributing to the maintenance of cellular calcium homeostasis (By similarity). Plays a critical role in nephrogenesis, specifically at pronephros stage (PubMed:27392076).</text>
</comment>
<comment type="subunit">
    <text evidence="1 2">The SEC61 channel-forming translocon complex consists of channel-forming core components SEC61A1, SEC61B and SEC61G and different auxiliary components such as SEC62 and SEC63 (By similarity). The SEC61 channel associates with the multi-pass translocon (MPT) complex (By similarity).</text>
</comment>
<comment type="subcellular location">
    <subcellularLocation>
        <location evidence="2">Endoplasmic reticulum membrane</location>
        <topology evidence="5">Multi-pass membrane protein</topology>
    </subcellularLocation>
    <text evidence="2">Localizes exclusively in granular structures in the endoplasmic reticulum (ER).</text>
</comment>
<comment type="miscellaneous">
    <text evidence="4">When transfected in zebrafish, is able to rescue the pronephric kidney tubule development phenotype of the morpholino knockdown of the orthologous protein.</text>
</comment>
<comment type="similarity">
    <text evidence="5">Belongs to the SecY/SEC61-alpha family.</text>
</comment>
<keyword id="KW-0217">Developmental protein</keyword>
<keyword id="KW-0256">Endoplasmic reticulum</keyword>
<keyword id="KW-0472">Membrane</keyword>
<keyword id="KW-0653">Protein transport</keyword>
<keyword id="KW-1185">Reference proteome</keyword>
<keyword id="KW-0811">Translocation</keyword>
<keyword id="KW-0812">Transmembrane</keyword>
<keyword id="KW-1133">Transmembrane helix</keyword>
<keyword id="KW-0813">Transport</keyword>
<proteinExistence type="evidence at protein level"/>
<gene>
    <name type="primary">Sec61a1</name>
    <name type="synonym">Sec61a</name>
</gene>
<organism>
    <name type="scientific">Mus musculus</name>
    <name type="common">Mouse</name>
    <dbReference type="NCBI Taxonomy" id="10090"/>
    <lineage>
        <taxon>Eukaryota</taxon>
        <taxon>Metazoa</taxon>
        <taxon>Chordata</taxon>
        <taxon>Craniata</taxon>
        <taxon>Vertebrata</taxon>
        <taxon>Euteleostomi</taxon>
        <taxon>Mammalia</taxon>
        <taxon>Eutheria</taxon>
        <taxon>Euarchontoglires</taxon>
        <taxon>Glires</taxon>
        <taxon>Rodentia</taxon>
        <taxon>Myomorpha</taxon>
        <taxon>Muroidea</taxon>
        <taxon>Muridae</taxon>
        <taxon>Murinae</taxon>
        <taxon>Mus</taxon>
        <taxon>Mus</taxon>
    </lineage>
</organism>
<accession>P61620</accession>
<accession>P38378</accession>
<accession>P57726</accession>
<accession>Q3TXA5</accession>
<dbReference type="EMBL" id="AB032902">
    <property type="protein sequence ID" value="BAA85159.1"/>
    <property type="molecule type" value="mRNA"/>
</dbReference>
<dbReference type="EMBL" id="AF222743">
    <property type="protein sequence ID" value="AAG44252.1"/>
    <property type="molecule type" value="mRNA"/>
</dbReference>
<dbReference type="EMBL" id="AF145253">
    <property type="protein sequence ID" value="AAF66695.1"/>
    <property type="molecule type" value="mRNA"/>
</dbReference>
<dbReference type="EMBL" id="AK088473">
    <property type="protein sequence ID" value="BAC40375.1"/>
    <property type="molecule type" value="mRNA"/>
</dbReference>
<dbReference type="EMBL" id="AK153055">
    <property type="protein sequence ID" value="BAE31681.1"/>
    <property type="molecule type" value="mRNA"/>
</dbReference>
<dbReference type="EMBL" id="AK159349">
    <property type="protein sequence ID" value="BAE35011.1"/>
    <property type="molecule type" value="mRNA"/>
</dbReference>
<dbReference type="EMBL" id="BC003707">
    <property type="protein sequence ID" value="AAH03707.1"/>
    <property type="molecule type" value="mRNA"/>
</dbReference>
<dbReference type="CCDS" id="CCDS39553.1"/>
<dbReference type="RefSeq" id="NP_058602.1">
    <property type="nucleotide sequence ID" value="NM_016906.5"/>
</dbReference>
<dbReference type="SMR" id="P61620"/>
<dbReference type="BioGRID" id="207315">
    <property type="interactions" value="17"/>
</dbReference>
<dbReference type="CORUM" id="P61620"/>
<dbReference type="FunCoup" id="P61620">
    <property type="interactions" value="2220"/>
</dbReference>
<dbReference type="IntAct" id="P61620">
    <property type="interactions" value="2"/>
</dbReference>
<dbReference type="MINT" id="P61620"/>
<dbReference type="STRING" id="10090.ENSMUSP00000032168"/>
<dbReference type="GlyGen" id="P61620">
    <property type="glycosylation" value="1 site, 1 O-linked glycan (1 site)"/>
</dbReference>
<dbReference type="iPTMnet" id="P61620"/>
<dbReference type="PhosphoSitePlus" id="P61620"/>
<dbReference type="SwissPalm" id="P61620"/>
<dbReference type="jPOST" id="P61620"/>
<dbReference type="PaxDb" id="10090-ENSMUSP00000032168"/>
<dbReference type="PeptideAtlas" id="P61620"/>
<dbReference type="ProteomicsDB" id="253386"/>
<dbReference type="Pumba" id="P61620"/>
<dbReference type="TopDownProteomics" id="P61620"/>
<dbReference type="Antibodypedia" id="17274">
    <property type="antibodies" value="175 antibodies from 33 providers"/>
</dbReference>
<dbReference type="DNASU" id="53421"/>
<dbReference type="Ensembl" id="ENSMUST00000032168.7">
    <property type="protein sequence ID" value="ENSMUSP00000032168.6"/>
    <property type="gene ID" value="ENSMUSG00000030082.15"/>
</dbReference>
<dbReference type="GeneID" id="53421"/>
<dbReference type="KEGG" id="mmu:53421"/>
<dbReference type="UCSC" id="uc009cvi.1">
    <property type="organism name" value="mouse"/>
</dbReference>
<dbReference type="AGR" id="MGI:1858417"/>
<dbReference type="CTD" id="29927"/>
<dbReference type="MGI" id="MGI:1858417">
    <property type="gene designation" value="Sec61a1"/>
</dbReference>
<dbReference type="VEuPathDB" id="HostDB:ENSMUSG00000030082"/>
<dbReference type="eggNOG" id="KOG1373">
    <property type="taxonomic scope" value="Eukaryota"/>
</dbReference>
<dbReference type="GeneTree" id="ENSGT00390000003721"/>
<dbReference type="HOGENOM" id="CLU_031763_2_0_1"/>
<dbReference type="InParanoid" id="P61620"/>
<dbReference type="OMA" id="PMMRQMF"/>
<dbReference type="OrthoDB" id="420669at2759"/>
<dbReference type="PhylomeDB" id="P61620"/>
<dbReference type="TreeFam" id="TF300348"/>
<dbReference type="BioGRID-ORCS" id="53421">
    <property type="hits" value="24 hits in 76 CRISPR screens"/>
</dbReference>
<dbReference type="ChiTaRS" id="Sec61a1">
    <property type="organism name" value="mouse"/>
</dbReference>
<dbReference type="PRO" id="PR:P61620"/>
<dbReference type="Proteomes" id="UP000000589">
    <property type="component" value="Chromosome 6"/>
</dbReference>
<dbReference type="RNAct" id="P61620">
    <property type="molecule type" value="protein"/>
</dbReference>
<dbReference type="Bgee" id="ENSMUSG00000030082">
    <property type="expression patterns" value="Expressed in internal carotid artery and 261 other cell types or tissues"/>
</dbReference>
<dbReference type="GO" id="GO:0005789">
    <property type="term" value="C:endoplasmic reticulum membrane"/>
    <property type="evidence" value="ECO:0000250"/>
    <property type="project" value="UniProtKB"/>
</dbReference>
<dbReference type="GO" id="GO:0016020">
    <property type="term" value="C:membrane"/>
    <property type="evidence" value="ECO:0000266"/>
    <property type="project" value="MGI"/>
</dbReference>
<dbReference type="GO" id="GO:0030670">
    <property type="term" value="C:phagocytic vesicle membrane"/>
    <property type="evidence" value="ECO:0000304"/>
    <property type="project" value="Reactome"/>
</dbReference>
<dbReference type="GO" id="GO:0005784">
    <property type="term" value="C:Sec61 translocon complex"/>
    <property type="evidence" value="ECO:0007669"/>
    <property type="project" value="Ensembl"/>
</dbReference>
<dbReference type="GO" id="GO:0005262">
    <property type="term" value="F:calcium channel activity"/>
    <property type="evidence" value="ECO:0000250"/>
    <property type="project" value="UniProtKB"/>
</dbReference>
<dbReference type="GO" id="GO:0043022">
    <property type="term" value="F:ribosome binding"/>
    <property type="evidence" value="ECO:0000314"/>
    <property type="project" value="MGI"/>
</dbReference>
<dbReference type="GO" id="GO:0022857">
    <property type="term" value="F:transmembrane transporter activity"/>
    <property type="evidence" value="ECO:0000269"/>
    <property type="project" value="Reactome"/>
</dbReference>
<dbReference type="GO" id="GO:0006613">
    <property type="term" value="P:cotranslational protein targeting to membrane"/>
    <property type="evidence" value="ECO:0000250"/>
    <property type="project" value="UniProtKB"/>
</dbReference>
<dbReference type="GO" id="GO:0007029">
    <property type="term" value="P:endoplasmic reticulum organization"/>
    <property type="evidence" value="ECO:0000266"/>
    <property type="project" value="MGI"/>
</dbReference>
<dbReference type="GO" id="GO:0006620">
    <property type="term" value="P:post-translational protein targeting to endoplasmic reticulum membrane"/>
    <property type="evidence" value="ECO:0000266"/>
    <property type="project" value="MGI"/>
</dbReference>
<dbReference type="GO" id="GO:0031204">
    <property type="term" value="P:post-translational protein targeting to membrane, translocation"/>
    <property type="evidence" value="ECO:0000250"/>
    <property type="project" value="UniProtKB"/>
</dbReference>
<dbReference type="GO" id="GO:0039019">
    <property type="term" value="P:pronephric nephron development"/>
    <property type="evidence" value="ECO:0000315"/>
    <property type="project" value="UniProtKB"/>
</dbReference>
<dbReference type="GO" id="GO:0045048">
    <property type="term" value="P:protein insertion into ER membrane"/>
    <property type="evidence" value="ECO:0000250"/>
    <property type="project" value="UniProtKB"/>
</dbReference>
<dbReference type="GO" id="GO:0034341">
    <property type="term" value="P:response to type II interferon"/>
    <property type="evidence" value="ECO:0007669"/>
    <property type="project" value="Ensembl"/>
</dbReference>
<dbReference type="GO" id="GO:0006614">
    <property type="term" value="P:SRP-dependent cotranslational protein targeting to membrane"/>
    <property type="evidence" value="ECO:0000266"/>
    <property type="project" value="MGI"/>
</dbReference>
<dbReference type="FunFam" id="1.10.3370.10:FF:000002">
    <property type="entry name" value="Transport Sec61 subunit alpha isoform 2"/>
    <property type="match status" value="1"/>
</dbReference>
<dbReference type="Gene3D" id="1.10.3370.10">
    <property type="entry name" value="SecY subunit domain"/>
    <property type="match status" value="1"/>
</dbReference>
<dbReference type="InterPro" id="IPR002208">
    <property type="entry name" value="SecY/SEC61-alpha"/>
</dbReference>
<dbReference type="InterPro" id="IPR030659">
    <property type="entry name" value="SecY_CS"/>
</dbReference>
<dbReference type="InterPro" id="IPR023201">
    <property type="entry name" value="SecY_dom_sf"/>
</dbReference>
<dbReference type="InterPro" id="IPR019561">
    <property type="entry name" value="Translocon_Sec61/SecY_plug_dom"/>
</dbReference>
<dbReference type="NCBIfam" id="TIGR00967">
    <property type="entry name" value="3a0501s007"/>
    <property type="match status" value="1"/>
</dbReference>
<dbReference type="NCBIfam" id="NF006341">
    <property type="entry name" value="PRK08568.1-5"/>
    <property type="match status" value="1"/>
</dbReference>
<dbReference type="PANTHER" id="PTHR10906">
    <property type="entry name" value="SECY/SEC61-ALPHA FAMILY MEMBER"/>
    <property type="match status" value="1"/>
</dbReference>
<dbReference type="Pfam" id="PF10559">
    <property type="entry name" value="Plug_translocon"/>
    <property type="match status" value="1"/>
</dbReference>
<dbReference type="Pfam" id="PF00344">
    <property type="entry name" value="SecY"/>
    <property type="match status" value="1"/>
</dbReference>
<dbReference type="PIRSF" id="PIRSF004557">
    <property type="entry name" value="SecY"/>
    <property type="match status" value="1"/>
</dbReference>
<dbReference type="SUPFAM" id="SSF103491">
    <property type="entry name" value="Preprotein translocase SecY subunit"/>
    <property type="match status" value="1"/>
</dbReference>
<dbReference type="PROSITE" id="PS00755">
    <property type="entry name" value="SECY_1"/>
    <property type="match status" value="1"/>
</dbReference>
<dbReference type="PROSITE" id="PS00756">
    <property type="entry name" value="SECY_2"/>
    <property type="match status" value="1"/>
</dbReference>
<reference key="1">
    <citation type="submission" date="1999-09" db="EMBL/GenBank/DDBJ databases">
        <title>Mouse protein transport protein sec61 alpha subunit.</title>
        <authorList>
            <person name="Hayashi A."/>
            <person name="Hattori A."/>
            <person name="Okaze H."/>
            <person name="Kozuma S."/>
            <person name="Seki N."/>
            <person name="Saito T."/>
        </authorList>
    </citation>
    <scope>NUCLEOTIDE SEQUENCE [MRNA]</scope>
</reference>
<reference key="2">
    <citation type="submission" date="1999-04" db="EMBL/GenBank/DDBJ databases">
        <title>Sec61 alpha isoforms.</title>
        <authorList>
            <person name="Finke K."/>
            <person name="Prehn S."/>
            <person name="Hartmann E."/>
        </authorList>
    </citation>
    <scope>NUCLEOTIDE SEQUENCE [MRNA]</scope>
</reference>
<reference key="3">
    <citation type="journal article" date="2005" name="Science">
        <title>The transcriptional landscape of the mammalian genome.</title>
        <authorList>
            <person name="Carninci P."/>
            <person name="Kasukawa T."/>
            <person name="Katayama S."/>
            <person name="Gough J."/>
            <person name="Frith M.C."/>
            <person name="Maeda N."/>
            <person name="Oyama R."/>
            <person name="Ravasi T."/>
            <person name="Lenhard B."/>
            <person name="Wells C."/>
            <person name="Kodzius R."/>
            <person name="Shimokawa K."/>
            <person name="Bajic V.B."/>
            <person name="Brenner S.E."/>
            <person name="Batalov S."/>
            <person name="Forrest A.R."/>
            <person name="Zavolan M."/>
            <person name="Davis M.J."/>
            <person name="Wilming L.G."/>
            <person name="Aidinis V."/>
            <person name="Allen J.E."/>
            <person name="Ambesi-Impiombato A."/>
            <person name="Apweiler R."/>
            <person name="Aturaliya R.N."/>
            <person name="Bailey T.L."/>
            <person name="Bansal M."/>
            <person name="Baxter L."/>
            <person name="Beisel K.W."/>
            <person name="Bersano T."/>
            <person name="Bono H."/>
            <person name="Chalk A.M."/>
            <person name="Chiu K.P."/>
            <person name="Choudhary V."/>
            <person name="Christoffels A."/>
            <person name="Clutterbuck D.R."/>
            <person name="Crowe M.L."/>
            <person name="Dalla E."/>
            <person name="Dalrymple B.P."/>
            <person name="de Bono B."/>
            <person name="Della Gatta G."/>
            <person name="di Bernardo D."/>
            <person name="Down T."/>
            <person name="Engstrom P."/>
            <person name="Fagiolini M."/>
            <person name="Faulkner G."/>
            <person name="Fletcher C.F."/>
            <person name="Fukushima T."/>
            <person name="Furuno M."/>
            <person name="Futaki S."/>
            <person name="Gariboldi M."/>
            <person name="Georgii-Hemming P."/>
            <person name="Gingeras T.R."/>
            <person name="Gojobori T."/>
            <person name="Green R.E."/>
            <person name="Gustincich S."/>
            <person name="Harbers M."/>
            <person name="Hayashi Y."/>
            <person name="Hensch T.K."/>
            <person name="Hirokawa N."/>
            <person name="Hill D."/>
            <person name="Huminiecki L."/>
            <person name="Iacono M."/>
            <person name="Ikeo K."/>
            <person name="Iwama A."/>
            <person name="Ishikawa T."/>
            <person name="Jakt M."/>
            <person name="Kanapin A."/>
            <person name="Katoh M."/>
            <person name="Kawasawa Y."/>
            <person name="Kelso J."/>
            <person name="Kitamura H."/>
            <person name="Kitano H."/>
            <person name="Kollias G."/>
            <person name="Krishnan S.P."/>
            <person name="Kruger A."/>
            <person name="Kummerfeld S.K."/>
            <person name="Kurochkin I.V."/>
            <person name="Lareau L.F."/>
            <person name="Lazarevic D."/>
            <person name="Lipovich L."/>
            <person name="Liu J."/>
            <person name="Liuni S."/>
            <person name="McWilliam S."/>
            <person name="Madan Babu M."/>
            <person name="Madera M."/>
            <person name="Marchionni L."/>
            <person name="Matsuda H."/>
            <person name="Matsuzawa S."/>
            <person name="Miki H."/>
            <person name="Mignone F."/>
            <person name="Miyake S."/>
            <person name="Morris K."/>
            <person name="Mottagui-Tabar S."/>
            <person name="Mulder N."/>
            <person name="Nakano N."/>
            <person name="Nakauchi H."/>
            <person name="Ng P."/>
            <person name="Nilsson R."/>
            <person name="Nishiguchi S."/>
            <person name="Nishikawa S."/>
            <person name="Nori F."/>
            <person name="Ohara O."/>
            <person name="Okazaki Y."/>
            <person name="Orlando V."/>
            <person name="Pang K.C."/>
            <person name="Pavan W.J."/>
            <person name="Pavesi G."/>
            <person name="Pesole G."/>
            <person name="Petrovsky N."/>
            <person name="Piazza S."/>
            <person name="Reed J."/>
            <person name="Reid J.F."/>
            <person name="Ring B.Z."/>
            <person name="Ringwald M."/>
            <person name="Rost B."/>
            <person name="Ruan Y."/>
            <person name="Salzberg S.L."/>
            <person name="Sandelin A."/>
            <person name="Schneider C."/>
            <person name="Schoenbach C."/>
            <person name="Sekiguchi K."/>
            <person name="Semple C.A."/>
            <person name="Seno S."/>
            <person name="Sessa L."/>
            <person name="Sheng Y."/>
            <person name="Shibata Y."/>
            <person name="Shimada H."/>
            <person name="Shimada K."/>
            <person name="Silva D."/>
            <person name="Sinclair B."/>
            <person name="Sperling S."/>
            <person name="Stupka E."/>
            <person name="Sugiura K."/>
            <person name="Sultana R."/>
            <person name="Takenaka Y."/>
            <person name="Taki K."/>
            <person name="Tammoja K."/>
            <person name="Tan S.L."/>
            <person name="Tang S."/>
            <person name="Taylor M.S."/>
            <person name="Tegner J."/>
            <person name="Teichmann S.A."/>
            <person name="Ueda H.R."/>
            <person name="van Nimwegen E."/>
            <person name="Verardo R."/>
            <person name="Wei C.L."/>
            <person name="Yagi K."/>
            <person name="Yamanishi H."/>
            <person name="Zabarovsky E."/>
            <person name="Zhu S."/>
            <person name="Zimmer A."/>
            <person name="Hide W."/>
            <person name="Bult C."/>
            <person name="Grimmond S.M."/>
            <person name="Teasdale R.D."/>
            <person name="Liu E.T."/>
            <person name="Brusic V."/>
            <person name="Quackenbush J."/>
            <person name="Wahlestedt C."/>
            <person name="Mattick J.S."/>
            <person name="Hume D.A."/>
            <person name="Kai C."/>
            <person name="Sasaki D."/>
            <person name="Tomaru Y."/>
            <person name="Fukuda S."/>
            <person name="Kanamori-Katayama M."/>
            <person name="Suzuki M."/>
            <person name="Aoki J."/>
            <person name="Arakawa T."/>
            <person name="Iida J."/>
            <person name="Imamura K."/>
            <person name="Itoh M."/>
            <person name="Kato T."/>
            <person name="Kawaji H."/>
            <person name="Kawagashira N."/>
            <person name="Kawashima T."/>
            <person name="Kojima M."/>
            <person name="Kondo S."/>
            <person name="Konno H."/>
            <person name="Nakano K."/>
            <person name="Ninomiya N."/>
            <person name="Nishio T."/>
            <person name="Okada M."/>
            <person name="Plessy C."/>
            <person name="Shibata K."/>
            <person name="Shiraki T."/>
            <person name="Suzuki S."/>
            <person name="Tagami M."/>
            <person name="Waki K."/>
            <person name="Watahiki A."/>
            <person name="Okamura-Oho Y."/>
            <person name="Suzuki H."/>
            <person name="Kawai J."/>
            <person name="Hayashizaki Y."/>
        </authorList>
    </citation>
    <scope>NUCLEOTIDE SEQUENCE [LARGE SCALE MRNA]</scope>
    <source>
        <strain>C57BL/6J</strain>
        <strain>NOD</strain>
        <tissue>Bone marrow</tissue>
        <tissue>Thymus</tissue>
    </source>
</reference>
<reference key="4">
    <citation type="journal article" date="2004" name="Genome Res.">
        <title>The status, quality, and expansion of the NIH full-length cDNA project: the Mammalian Gene Collection (MGC).</title>
        <authorList>
            <consortium name="The MGC Project Team"/>
        </authorList>
    </citation>
    <scope>NUCLEOTIDE SEQUENCE [LARGE SCALE MRNA]</scope>
</reference>
<reference key="5">
    <citation type="journal article" date="2010" name="Cell">
        <title>A tissue-specific atlas of mouse protein phosphorylation and expression.</title>
        <authorList>
            <person name="Huttlin E.L."/>
            <person name="Jedrychowski M.P."/>
            <person name="Elias J.E."/>
            <person name="Goswami T."/>
            <person name="Rad R."/>
            <person name="Beausoleil S.A."/>
            <person name="Villen J."/>
            <person name="Haas W."/>
            <person name="Sowa M.E."/>
            <person name="Gygi S.P."/>
        </authorList>
    </citation>
    <scope>IDENTIFICATION BY MASS SPECTROMETRY [LARGE SCALE ANALYSIS]</scope>
    <source>
        <tissue>Liver</tissue>
        <tissue>Lung</tissue>
        <tissue>Pancreas</tissue>
        <tissue>Spleen</tissue>
        <tissue>Testis</tissue>
    </source>
</reference>
<reference key="6">
    <citation type="journal article" date="2016" name="Am. J. Hum. Genet.">
        <title>Heterozygous loss-of-function SEC61A1 mutations cause autosomal-dominant tubulo-interstitial and glomerulocystic kidney disease with anemia.</title>
        <authorList>
            <person name="Bolar N.A."/>
            <person name="Golzio C."/>
            <person name="Zivna M."/>
            <person name="Hayot G."/>
            <person name="Van Hemelrijk C."/>
            <person name="Schepers D."/>
            <person name="Vandeweyer G."/>
            <person name="Hoischen A."/>
            <person name="Huyghe J.R."/>
            <person name="Raes A."/>
            <person name="Matthys E."/>
            <person name="Sys E."/>
            <person name="Azou M."/>
            <person name="Gubler M.C."/>
            <person name="Praet M."/>
            <person name="Van Camp G."/>
            <person name="McFadden K."/>
            <person name="Pediaditakis I."/>
            <person name="Pristoupilova A."/>
            <person name="Hodanova K."/>
            <person name="Vyletal P."/>
            <person name="Hartmannova H."/>
            <person name="Stranecky V."/>
            <person name="Hulkova H."/>
            <person name="Baresova V."/>
            <person name="Jedlickova I."/>
            <person name="Sovova J."/>
            <person name="Hnizda A."/>
            <person name="Kidd K."/>
            <person name="Bleyer A.J."/>
            <person name="Spong R.S."/>
            <person name="Vande Walle J."/>
            <person name="Mortier G."/>
            <person name="Brunner H."/>
            <person name="Van Laer L."/>
            <person name="Kmoch S."/>
            <person name="Katsanis N."/>
            <person name="Loeys B.L."/>
        </authorList>
    </citation>
    <scope>FUNCTION</scope>
    <scope>MUTAGENESIS OF VAL-67 AND THR-185</scope>
</reference>